<comment type="function">
    <text evidence="1">Catalyzes the ATP-dependent conversion of 5-aminoimidazole ribonucleotide (AIR) and HCO(3)(-) to N5-carboxyaminoimidazole ribonucleotide (N5-CAIR).</text>
</comment>
<comment type="catalytic activity">
    <reaction evidence="1">
        <text>5-amino-1-(5-phospho-beta-D-ribosyl)imidazole + hydrogencarbonate + ATP = 5-carboxyamino-1-(5-phospho-D-ribosyl)imidazole + ADP + phosphate + 2 H(+)</text>
        <dbReference type="Rhea" id="RHEA:19317"/>
        <dbReference type="ChEBI" id="CHEBI:15378"/>
        <dbReference type="ChEBI" id="CHEBI:17544"/>
        <dbReference type="ChEBI" id="CHEBI:30616"/>
        <dbReference type="ChEBI" id="CHEBI:43474"/>
        <dbReference type="ChEBI" id="CHEBI:58730"/>
        <dbReference type="ChEBI" id="CHEBI:137981"/>
        <dbReference type="ChEBI" id="CHEBI:456216"/>
        <dbReference type="EC" id="6.3.4.18"/>
    </reaction>
</comment>
<comment type="pathway">
    <text evidence="1">Purine metabolism; IMP biosynthesis via de novo pathway; 5-amino-1-(5-phospho-D-ribosyl)imidazole-4-carboxylate from 5-amino-1-(5-phospho-D-ribosyl)imidazole (N5-CAIR route): step 1/2.</text>
</comment>
<comment type="subunit">
    <text evidence="1">Homodimer.</text>
</comment>
<comment type="similarity">
    <text evidence="1">Belongs to the PurK/PurT family.</text>
</comment>
<proteinExistence type="inferred from homology"/>
<evidence type="ECO:0000255" key="1">
    <source>
        <dbReference type="HAMAP-Rule" id="MF_01928"/>
    </source>
</evidence>
<evidence type="ECO:0000256" key="2">
    <source>
        <dbReference type="SAM" id="MobiDB-lite"/>
    </source>
</evidence>
<accession>P65899</accession>
<accession>A0A1R3Y3N8</accession>
<accession>P96881</accession>
<accession>X2BNX8</accession>
<gene>
    <name evidence="1" type="primary">purK</name>
    <name type="ordered locus">BQ2027_MB3304C</name>
</gene>
<dbReference type="EC" id="6.3.4.18" evidence="1"/>
<dbReference type="EMBL" id="LT708304">
    <property type="protein sequence ID" value="SIU01933.1"/>
    <property type="molecule type" value="Genomic_DNA"/>
</dbReference>
<dbReference type="RefSeq" id="NP_856949.1">
    <property type="nucleotide sequence ID" value="NC_002945.3"/>
</dbReference>
<dbReference type="RefSeq" id="WP_003417126.1">
    <property type="nucleotide sequence ID" value="NC_002945.4"/>
</dbReference>
<dbReference type="SMR" id="P65899"/>
<dbReference type="KEGG" id="mbo:BQ2027_MB3304C"/>
<dbReference type="PATRIC" id="fig|233413.5.peg.3633"/>
<dbReference type="UniPathway" id="UPA00074">
    <property type="reaction ID" value="UER00942"/>
</dbReference>
<dbReference type="Proteomes" id="UP000001419">
    <property type="component" value="Chromosome"/>
</dbReference>
<dbReference type="GO" id="GO:0005829">
    <property type="term" value="C:cytosol"/>
    <property type="evidence" value="ECO:0007669"/>
    <property type="project" value="TreeGrafter"/>
</dbReference>
<dbReference type="GO" id="GO:0034028">
    <property type="term" value="F:5-(carboxyamino)imidazole ribonucleotide synthase activity"/>
    <property type="evidence" value="ECO:0007669"/>
    <property type="project" value="UniProtKB-UniRule"/>
</dbReference>
<dbReference type="GO" id="GO:0005524">
    <property type="term" value="F:ATP binding"/>
    <property type="evidence" value="ECO:0007669"/>
    <property type="project" value="UniProtKB-KW"/>
</dbReference>
<dbReference type="GO" id="GO:0046872">
    <property type="term" value="F:metal ion binding"/>
    <property type="evidence" value="ECO:0007669"/>
    <property type="project" value="InterPro"/>
</dbReference>
<dbReference type="GO" id="GO:0004638">
    <property type="term" value="F:phosphoribosylaminoimidazole carboxylase activity"/>
    <property type="evidence" value="ECO:0007669"/>
    <property type="project" value="InterPro"/>
</dbReference>
<dbReference type="GO" id="GO:0006189">
    <property type="term" value="P:'de novo' IMP biosynthetic process"/>
    <property type="evidence" value="ECO:0007669"/>
    <property type="project" value="UniProtKB-UniRule"/>
</dbReference>
<dbReference type="FunFam" id="3.30.1490.20:FF:000015">
    <property type="entry name" value="N5-carboxyaminoimidazole ribonucleotide synthase"/>
    <property type="match status" value="1"/>
</dbReference>
<dbReference type="FunFam" id="3.30.470.20:FF:000029">
    <property type="entry name" value="N5-carboxyaminoimidazole ribonucleotide synthase"/>
    <property type="match status" value="1"/>
</dbReference>
<dbReference type="FunFam" id="3.40.50.20:FF:000025">
    <property type="entry name" value="N5-carboxyaminoimidazole ribonucleotide synthase"/>
    <property type="match status" value="1"/>
</dbReference>
<dbReference type="Gene3D" id="3.40.50.20">
    <property type="match status" value="1"/>
</dbReference>
<dbReference type="Gene3D" id="3.30.1490.20">
    <property type="entry name" value="ATP-grasp fold, A domain"/>
    <property type="match status" value="1"/>
</dbReference>
<dbReference type="Gene3D" id="3.30.470.20">
    <property type="entry name" value="ATP-grasp fold, B domain"/>
    <property type="match status" value="1"/>
</dbReference>
<dbReference type="HAMAP" id="MF_01928">
    <property type="entry name" value="PurK"/>
    <property type="match status" value="1"/>
</dbReference>
<dbReference type="InterPro" id="IPR011761">
    <property type="entry name" value="ATP-grasp"/>
</dbReference>
<dbReference type="InterPro" id="IPR003135">
    <property type="entry name" value="ATP-grasp_carboxylate-amine"/>
</dbReference>
<dbReference type="InterPro" id="IPR013815">
    <property type="entry name" value="ATP_grasp_subdomain_1"/>
</dbReference>
<dbReference type="InterPro" id="IPR016185">
    <property type="entry name" value="PreATP-grasp_dom_sf"/>
</dbReference>
<dbReference type="InterPro" id="IPR005875">
    <property type="entry name" value="PurK"/>
</dbReference>
<dbReference type="InterPro" id="IPR040686">
    <property type="entry name" value="PurK_C"/>
</dbReference>
<dbReference type="InterPro" id="IPR054350">
    <property type="entry name" value="PurT/PurK_preATP-grasp"/>
</dbReference>
<dbReference type="InterPro" id="IPR011054">
    <property type="entry name" value="Rudment_hybrid_motif"/>
</dbReference>
<dbReference type="NCBIfam" id="NF004679">
    <property type="entry name" value="PRK06019.1-5"/>
    <property type="match status" value="1"/>
</dbReference>
<dbReference type="NCBIfam" id="NF004680">
    <property type="entry name" value="PRK06019.1-6"/>
    <property type="match status" value="1"/>
</dbReference>
<dbReference type="NCBIfam" id="TIGR01161">
    <property type="entry name" value="purK"/>
    <property type="match status" value="1"/>
</dbReference>
<dbReference type="PANTHER" id="PTHR11609:SF5">
    <property type="entry name" value="PHOSPHORIBOSYLAMINOIMIDAZOLE CARBOXYLASE"/>
    <property type="match status" value="1"/>
</dbReference>
<dbReference type="PANTHER" id="PTHR11609">
    <property type="entry name" value="PURINE BIOSYNTHESIS PROTEIN 6/7, PUR6/7"/>
    <property type="match status" value="1"/>
</dbReference>
<dbReference type="Pfam" id="PF02222">
    <property type="entry name" value="ATP-grasp"/>
    <property type="match status" value="1"/>
</dbReference>
<dbReference type="Pfam" id="PF17769">
    <property type="entry name" value="PurK_C"/>
    <property type="match status" value="1"/>
</dbReference>
<dbReference type="Pfam" id="PF22660">
    <property type="entry name" value="RS_preATP-grasp-like"/>
    <property type="match status" value="1"/>
</dbReference>
<dbReference type="SMART" id="SM01209">
    <property type="entry name" value="GARS_A"/>
    <property type="match status" value="1"/>
</dbReference>
<dbReference type="SUPFAM" id="SSF56059">
    <property type="entry name" value="Glutathione synthetase ATP-binding domain-like"/>
    <property type="match status" value="1"/>
</dbReference>
<dbReference type="SUPFAM" id="SSF52440">
    <property type="entry name" value="PreATP-grasp domain"/>
    <property type="match status" value="1"/>
</dbReference>
<dbReference type="SUPFAM" id="SSF51246">
    <property type="entry name" value="Rudiment single hybrid motif"/>
    <property type="match status" value="1"/>
</dbReference>
<dbReference type="PROSITE" id="PS50975">
    <property type="entry name" value="ATP_GRASP"/>
    <property type="match status" value="1"/>
</dbReference>
<keyword id="KW-0067">ATP-binding</keyword>
<keyword id="KW-0436">Ligase</keyword>
<keyword id="KW-0547">Nucleotide-binding</keyword>
<keyword id="KW-0658">Purine biosynthesis</keyword>
<keyword id="KW-1185">Reference proteome</keyword>
<reference key="1">
    <citation type="journal article" date="2003" name="Proc. Natl. Acad. Sci. U.S.A.">
        <title>The complete genome sequence of Mycobacterium bovis.</title>
        <authorList>
            <person name="Garnier T."/>
            <person name="Eiglmeier K."/>
            <person name="Camus J.-C."/>
            <person name="Medina N."/>
            <person name="Mansoor H."/>
            <person name="Pryor M."/>
            <person name="Duthoy S."/>
            <person name="Grondin S."/>
            <person name="Lacroix C."/>
            <person name="Monsempe C."/>
            <person name="Simon S."/>
            <person name="Harris B."/>
            <person name="Atkin R."/>
            <person name="Doggett J."/>
            <person name="Mayes R."/>
            <person name="Keating L."/>
            <person name="Wheeler P.R."/>
            <person name="Parkhill J."/>
            <person name="Barrell B.G."/>
            <person name="Cole S.T."/>
            <person name="Gordon S.V."/>
            <person name="Hewinson R.G."/>
        </authorList>
    </citation>
    <scope>NUCLEOTIDE SEQUENCE [LARGE SCALE GENOMIC DNA]</scope>
    <source>
        <strain>ATCC BAA-935 / AF2122/97</strain>
    </source>
</reference>
<reference key="2">
    <citation type="journal article" date="2017" name="Genome Announc.">
        <title>Updated reference genome sequence and annotation of Mycobacterium bovis AF2122/97.</title>
        <authorList>
            <person name="Malone K.M."/>
            <person name="Farrell D."/>
            <person name="Stuber T.P."/>
            <person name="Schubert O.T."/>
            <person name="Aebersold R."/>
            <person name="Robbe-Austerman S."/>
            <person name="Gordon S.V."/>
        </authorList>
    </citation>
    <scope>NUCLEOTIDE SEQUENCE [LARGE SCALE GENOMIC DNA]</scope>
    <scope>GENOME REANNOTATION</scope>
    <source>
        <strain>ATCC BAA-935 / AF2122/97</strain>
    </source>
</reference>
<name>PURK_MYCBO</name>
<sequence>MMAVASSRTPAVTSFIAPLVAMVGGGQLARMTHQAAIALGQNLRVLVTSADDPAAQVTPNVVIGSHTDLAALRRVAAGADVLTFDHEHVPNELLEKLVADGVNVAPSPQALVHAQDKLVMRQRLAAAGVAVPRYAGIKDPDEIDVFAARVDAPIVVKAVRGGYDGRGVRMARDVADARDFARECLADGVAVLVEERVDLRRELSALVARSPFGQGAAWPVVQTVQRDGTCVLVIAPAPALPDDLATAAQRLALQLADELGVVGVLAVELFETTDGALLVNELAMRPHNSGHWTIDGARTSQFEQHLRAVLDYPLGDSDAVVPVTVMANVLGAAQPPAMSVDERLHHLFARMPDARVHLYGKAERPGRKVGHINFLGSDVAQLCERAELAAHWLSHGRWTDGWDPHRASDDAVGVPPACGGRSDEEERRL</sequence>
<organism>
    <name type="scientific">Mycobacterium bovis (strain ATCC BAA-935 / AF2122/97)</name>
    <dbReference type="NCBI Taxonomy" id="233413"/>
    <lineage>
        <taxon>Bacteria</taxon>
        <taxon>Bacillati</taxon>
        <taxon>Actinomycetota</taxon>
        <taxon>Actinomycetes</taxon>
        <taxon>Mycobacteriales</taxon>
        <taxon>Mycobacteriaceae</taxon>
        <taxon>Mycobacterium</taxon>
        <taxon>Mycobacterium tuberculosis complex</taxon>
    </lineage>
</organism>
<feature type="chain" id="PRO_0000075001" description="N5-carboxyaminoimidazole ribonucleotide synthase">
    <location>
        <begin position="1"/>
        <end position="429"/>
    </location>
</feature>
<feature type="domain" description="ATP-grasp" evidence="1">
    <location>
        <begin position="121"/>
        <end position="310"/>
    </location>
</feature>
<feature type="region of interest" description="Disordered" evidence="2">
    <location>
        <begin position="406"/>
        <end position="429"/>
    </location>
</feature>
<feature type="binding site" evidence="1">
    <location>
        <position position="117"/>
    </location>
    <ligand>
        <name>ATP</name>
        <dbReference type="ChEBI" id="CHEBI:30616"/>
    </ligand>
</feature>
<feature type="binding site" evidence="1">
    <location>
        <position position="157"/>
    </location>
    <ligand>
        <name>ATP</name>
        <dbReference type="ChEBI" id="CHEBI:30616"/>
    </ligand>
</feature>
<feature type="binding site" evidence="1">
    <location>
        <begin position="194"/>
        <end position="197"/>
    </location>
    <ligand>
        <name>ATP</name>
        <dbReference type="ChEBI" id="CHEBI:30616"/>
    </ligand>
</feature>
<feature type="binding site" evidence="1">
    <location>
        <position position="202"/>
    </location>
    <ligand>
        <name>ATP</name>
        <dbReference type="ChEBI" id="CHEBI:30616"/>
    </ligand>
</feature>
<feature type="binding site" evidence="1">
    <location>
        <begin position="280"/>
        <end position="281"/>
    </location>
    <ligand>
        <name>ATP</name>
        <dbReference type="ChEBI" id="CHEBI:30616"/>
    </ligand>
</feature>
<protein>
    <recommendedName>
        <fullName evidence="1">N5-carboxyaminoimidazole ribonucleotide synthase</fullName>
        <shortName evidence="1">N5-CAIR synthase</shortName>
        <ecNumber evidence="1">6.3.4.18</ecNumber>
    </recommendedName>
    <alternativeName>
        <fullName evidence="1">5-(carboxyamino)imidazole ribonucleotide synthetase</fullName>
    </alternativeName>
</protein>